<dbReference type="EC" id="2.7.11.1"/>
<dbReference type="EMBL" id="M15424">
    <property type="protein sequence ID" value="AAA46581.1"/>
    <property type="molecule type" value="Genomic_DNA"/>
</dbReference>
<dbReference type="PIR" id="A26592">
    <property type="entry name" value="TVMVM9"/>
</dbReference>
<dbReference type="SMR" id="P10421"/>
<dbReference type="BRENDA" id="2.7.10.2">
    <property type="organism ID" value="3536"/>
</dbReference>
<dbReference type="GO" id="GO:0005524">
    <property type="term" value="F:ATP binding"/>
    <property type="evidence" value="ECO:0007669"/>
    <property type="project" value="UniProtKB-KW"/>
</dbReference>
<dbReference type="GO" id="GO:0106310">
    <property type="term" value="F:protein serine kinase activity"/>
    <property type="evidence" value="ECO:0007669"/>
    <property type="project" value="RHEA"/>
</dbReference>
<dbReference type="GO" id="GO:0004674">
    <property type="term" value="F:protein serine/threonine kinase activity"/>
    <property type="evidence" value="ECO:0007669"/>
    <property type="project" value="UniProtKB-KW"/>
</dbReference>
<dbReference type="CDD" id="cd13979">
    <property type="entry name" value="STKc_Mos"/>
    <property type="match status" value="1"/>
</dbReference>
<dbReference type="FunFam" id="1.10.510.10:FF:000490">
    <property type="entry name" value="Proto-oncogene serine/threonine-protein kinase mos"/>
    <property type="match status" value="1"/>
</dbReference>
<dbReference type="FunFam" id="3.30.200.20:FF:000316">
    <property type="entry name" value="Proto-oncogene serine/threonine-protein kinase mos"/>
    <property type="match status" value="1"/>
</dbReference>
<dbReference type="Gene3D" id="3.30.200.20">
    <property type="entry name" value="Phosphorylase Kinase, domain 1"/>
    <property type="match status" value="1"/>
</dbReference>
<dbReference type="Gene3D" id="1.10.510.10">
    <property type="entry name" value="Transferase(Phosphotransferase) domain 1"/>
    <property type="match status" value="1"/>
</dbReference>
<dbReference type="InterPro" id="IPR011009">
    <property type="entry name" value="Kinase-like_dom_sf"/>
</dbReference>
<dbReference type="InterPro" id="IPR000719">
    <property type="entry name" value="Prot_kinase_dom"/>
</dbReference>
<dbReference type="InterPro" id="IPR017441">
    <property type="entry name" value="Protein_kinase_ATP_BS"/>
</dbReference>
<dbReference type="InterPro" id="IPR008271">
    <property type="entry name" value="Ser/Thr_kinase_AS"/>
</dbReference>
<dbReference type="InterPro" id="IPR051681">
    <property type="entry name" value="Ser/Thr_Kinases-Pseudokinases"/>
</dbReference>
<dbReference type="PANTHER" id="PTHR44329">
    <property type="entry name" value="SERINE/THREONINE-PROTEIN KINASE TNNI3K-RELATED"/>
    <property type="match status" value="1"/>
</dbReference>
<dbReference type="PANTHER" id="PTHR44329:SF285">
    <property type="entry name" value="V-MOS MOLONEY MURINE SARCOMA VIRAL ONCO HOMOLOG"/>
    <property type="match status" value="1"/>
</dbReference>
<dbReference type="Pfam" id="PF00069">
    <property type="entry name" value="Pkinase"/>
    <property type="match status" value="1"/>
</dbReference>
<dbReference type="SMART" id="SM00220">
    <property type="entry name" value="S_TKc"/>
    <property type="match status" value="1"/>
</dbReference>
<dbReference type="SUPFAM" id="SSF56112">
    <property type="entry name" value="Protein kinase-like (PK-like)"/>
    <property type="match status" value="1"/>
</dbReference>
<dbReference type="PROSITE" id="PS00107">
    <property type="entry name" value="PROTEIN_KINASE_ATP"/>
    <property type="match status" value="1"/>
</dbReference>
<dbReference type="PROSITE" id="PS50011">
    <property type="entry name" value="PROTEIN_KINASE_DOM"/>
    <property type="match status" value="1"/>
</dbReference>
<dbReference type="PROSITE" id="PS00108">
    <property type="entry name" value="PROTEIN_KINASE_ST"/>
    <property type="match status" value="1"/>
</dbReference>
<organism>
    <name type="scientific">Myeloproliferative sarcoma virus (isolate ts159)</name>
    <dbReference type="NCBI Taxonomy" id="11814"/>
    <lineage>
        <taxon>Viruses</taxon>
        <taxon>Riboviria</taxon>
        <taxon>Pararnavirae</taxon>
        <taxon>Artverviricota</taxon>
        <taxon>Revtraviricetes</taxon>
        <taxon>Ortervirales</taxon>
        <taxon>Retroviridae</taxon>
        <taxon>Orthoretrovirinae</taxon>
        <taxon>Gammaretrovirus</taxon>
        <taxon>Moloney murine sarcoma virus</taxon>
    </lineage>
</organism>
<keyword id="KW-0067">ATP-binding</keyword>
<keyword id="KW-0418">Kinase</keyword>
<keyword id="KW-0547">Nucleotide-binding</keyword>
<keyword id="KW-0553">Oncogene</keyword>
<keyword id="KW-0723">Serine/threonine-protein kinase</keyword>
<keyword id="KW-0808">Transferase</keyword>
<feature type="chain" id="PRO_0000086363" description="Serine/threonine-protein kinase-transforming protein mos">
    <location>
        <begin position="1"/>
        <end position="342"/>
    </location>
</feature>
<feature type="domain" description="Protein kinase" evidence="1">
    <location>
        <begin position="63"/>
        <end position="338"/>
    </location>
</feature>
<feature type="active site" description="Proton acceptor" evidence="1 2">
    <location>
        <position position="198"/>
    </location>
</feature>
<feature type="binding site" evidence="1">
    <location>
        <begin position="69"/>
        <end position="77"/>
    </location>
    <ligand>
        <name>ATP</name>
        <dbReference type="ChEBI" id="CHEBI:30616"/>
    </ligand>
</feature>
<feature type="binding site" evidence="1">
    <location>
        <position position="90"/>
    </location>
    <ligand>
        <name>ATP</name>
        <dbReference type="ChEBI" id="CHEBI:30616"/>
    </ligand>
</feature>
<evidence type="ECO:0000255" key="1">
    <source>
        <dbReference type="PROSITE-ProRule" id="PRU00159"/>
    </source>
</evidence>
<evidence type="ECO:0000255" key="2">
    <source>
        <dbReference type="PROSITE-ProRule" id="PRU10027"/>
    </source>
</evidence>
<comment type="catalytic activity">
    <reaction>
        <text>L-seryl-[protein] + ATP = O-phospho-L-seryl-[protein] + ADP + H(+)</text>
        <dbReference type="Rhea" id="RHEA:17989"/>
        <dbReference type="Rhea" id="RHEA-COMP:9863"/>
        <dbReference type="Rhea" id="RHEA-COMP:11604"/>
        <dbReference type="ChEBI" id="CHEBI:15378"/>
        <dbReference type="ChEBI" id="CHEBI:29999"/>
        <dbReference type="ChEBI" id="CHEBI:30616"/>
        <dbReference type="ChEBI" id="CHEBI:83421"/>
        <dbReference type="ChEBI" id="CHEBI:456216"/>
        <dbReference type="EC" id="2.7.11.1"/>
    </reaction>
</comment>
<comment type="catalytic activity">
    <reaction>
        <text>L-threonyl-[protein] + ATP = O-phospho-L-threonyl-[protein] + ADP + H(+)</text>
        <dbReference type="Rhea" id="RHEA:46608"/>
        <dbReference type="Rhea" id="RHEA-COMP:11060"/>
        <dbReference type="Rhea" id="RHEA-COMP:11605"/>
        <dbReference type="ChEBI" id="CHEBI:15378"/>
        <dbReference type="ChEBI" id="CHEBI:30013"/>
        <dbReference type="ChEBI" id="CHEBI:30616"/>
        <dbReference type="ChEBI" id="CHEBI:61977"/>
        <dbReference type="ChEBI" id="CHEBI:456216"/>
        <dbReference type="EC" id="2.7.11.1"/>
    </reaction>
</comment>
<comment type="similarity">
    <text evidence="1">Belongs to the protein kinase superfamily. Ser/Thr protein kinase family.</text>
</comment>
<sequence>MPSPLSLCRYLPRELSPSVDSRSCSIPLVAPRKAGKLFLGTTPPRAPGLPRRLAWFSIDWEQVCLMHRLGSGGFGSVYKATYHGVPVAIKQVNKCTKDLRASQRSFWAELNIARLRHDNIVRVVAASTRTPEDSNSLGTIIMEFGGNVTLHQVIYGATRSPEPLSCREQLSLGKCLKYSLDVVNGLLFLHSQSILHLDLKPANILISEQDVCKISDFGCSQKLQDLRCRQSPHHIGGTYTHQAPEILKGEIATPKADIYSFGITLWQMTTREVPYSGEPQYVQYAVVAYNLRPSLTGAVFTASLTRKTLQNIIQNCWEARALQRPGAELLQRDLKAFRGALG</sequence>
<gene>
    <name type="primary">V-MOS</name>
</gene>
<organismHost>
    <name type="scientific">Mus musculus</name>
    <name type="common">Mouse</name>
    <dbReference type="NCBI Taxonomy" id="10090"/>
</organismHost>
<name>MOS_MSVTS</name>
<protein>
    <recommendedName>
        <fullName>Serine/threonine-protein kinase-transforming protein mos</fullName>
        <ecNumber>2.7.11.1</ecNumber>
    </recommendedName>
</protein>
<reference key="1">
    <citation type="journal article" date="1987" name="J. Virol.">
        <title>A temperature-sensitive mutant of the myeloproliferative sarcoma virus, altered by a point mutation in the mos oncogene, has been modified as a selectable retroviral vector.</title>
        <authorList>
            <person name="Friel J."/>
            <person name="Stocking C."/>
            <person name="Stacey A."/>
            <person name="Ostertag W."/>
        </authorList>
    </citation>
    <scope>NUCLEOTIDE SEQUENCE [GENOMIC DNA]</scope>
</reference>
<accession>P10421</accession>
<proteinExistence type="inferred from homology"/>